<proteinExistence type="inferred from homology"/>
<comment type="function">
    <text evidence="1">Catalyzes the formation of acetyl phosphate from acetate and ATP. Can also catalyze the reverse reaction.</text>
</comment>
<comment type="catalytic activity">
    <reaction evidence="1">
        <text>acetate + ATP = acetyl phosphate + ADP</text>
        <dbReference type="Rhea" id="RHEA:11352"/>
        <dbReference type="ChEBI" id="CHEBI:22191"/>
        <dbReference type="ChEBI" id="CHEBI:30089"/>
        <dbReference type="ChEBI" id="CHEBI:30616"/>
        <dbReference type="ChEBI" id="CHEBI:456216"/>
        <dbReference type="EC" id="2.7.2.1"/>
    </reaction>
</comment>
<comment type="cofactor">
    <cofactor evidence="1">
        <name>Mg(2+)</name>
        <dbReference type="ChEBI" id="CHEBI:18420"/>
    </cofactor>
    <cofactor evidence="1">
        <name>Mn(2+)</name>
        <dbReference type="ChEBI" id="CHEBI:29035"/>
    </cofactor>
    <text evidence="1">Mg(2+). Can also accept Mn(2+).</text>
</comment>
<comment type="pathway">
    <text evidence="1">Metabolic intermediate biosynthesis; acetyl-CoA biosynthesis; acetyl-CoA from acetate: step 1/2.</text>
</comment>
<comment type="subunit">
    <text evidence="1">Homodimer.</text>
</comment>
<comment type="subcellular location">
    <subcellularLocation>
        <location evidence="1">Cytoplasm</location>
    </subcellularLocation>
</comment>
<comment type="similarity">
    <text evidence="1">Belongs to the acetokinase family.</text>
</comment>
<sequence length="399" mass="42732">MTRTVLVLNSGSSSLKFQLLEPDSGASLADGIVERIGEDSSSASLVCGEREVTHSERVPDHEAALRTAYGLFDEAGAELGSVGLVAVGHRVVHGGPDLYQPTLIDDALVDTLESLAPLAPLHNPPAVLGIRGARKAFPDLPHVAVFDTAYFHDLPAAAATYAIDRDLSEQWHIRRYGFHGTSHQYVSEQAALFLDVPLSSLSQIVLHLGNGASASAILGGRPIDTSMGLTPMEGLVMGTRSGDVDPGVLVYLWRTAGMSVDEIETMLNKRSGVRGLGGEIDFRVLHQRIESGDESDRENAQLAYDVYIHRLRKYIGAYLALLGSTDVIVFTAGVGENDAAVRRDALSGMGRLGIELDEHLNESPSHTARRISAETSPTTVLVIPTNEELAIARACVEVI</sequence>
<name>ACKA_MYCSJ</name>
<protein>
    <recommendedName>
        <fullName evidence="1">Acetate kinase</fullName>
        <ecNumber evidence="1">2.7.2.1</ecNumber>
    </recommendedName>
    <alternativeName>
        <fullName evidence="1">Acetokinase</fullName>
    </alternativeName>
</protein>
<dbReference type="EC" id="2.7.2.1" evidence="1"/>
<dbReference type="EMBL" id="CP000580">
    <property type="protein sequence ID" value="ABN96340.1"/>
    <property type="molecule type" value="Genomic_DNA"/>
</dbReference>
<dbReference type="SMR" id="A3PTW3"/>
<dbReference type="KEGG" id="mjl:Mjls_0528"/>
<dbReference type="HOGENOM" id="CLU_020352_0_1_11"/>
<dbReference type="BioCyc" id="MSP164757:G1G8C-535-MONOMER"/>
<dbReference type="UniPathway" id="UPA00340">
    <property type="reaction ID" value="UER00458"/>
</dbReference>
<dbReference type="GO" id="GO:0005737">
    <property type="term" value="C:cytoplasm"/>
    <property type="evidence" value="ECO:0007669"/>
    <property type="project" value="UniProtKB-SubCell"/>
</dbReference>
<dbReference type="GO" id="GO:0008776">
    <property type="term" value="F:acetate kinase activity"/>
    <property type="evidence" value="ECO:0007669"/>
    <property type="project" value="UniProtKB-UniRule"/>
</dbReference>
<dbReference type="GO" id="GO:0005524">
    <property type="term" value="F:ATP binding"/>
    <property type="evidence" value="ECO:0007669"/>
    <property type="project" value="UniProtKB-KW"/>
</dbReference>
<dbReference type="GO" id="GO:0000287">
    <property type="term" value="F:magnesium ion binding"/>
    <property type="evidence" value="ECO:0007669"/>
    <property type="project" value="UniProtKB-UniRule"/>
</dbReference>
<dbReference type="GO" id="GO:0006083">
    <property type="term" value="P:acetate metabolic process"/>
    <property type="evidence" value="ECO:0007669"/>
    <property type="project" value="TreeGrafter"/>
</dbReference>
<dbReference type="GO" id="GO:0006085">
    <property type="term" value="P:acetyl-CoA biosynthetic process"/>
    <property type="evidence" value="ECO:0007669"/>
    <property type="project" value="UniProtKB-UniRule"/>
</dbReference>
<dbReference type="CDD" id="cd24010">
    <property type="entry name" value="ASKHA_NBD_AcK_PK"/>
    <property type="match status" value="1"/>
</dbReference>
<dbReference type="Gene3D" id="3.30.420.40">
    <property type="match status" value="2"/>
</dbReference>
<dbReference type="HAMAP" id="MF_00020">
    <property type="entry name" value="Acetate_kinase"/>
    <property type="match status" value="1"/>
</dbReference>
<dbReference type="InterPro" id="IPR004372">
    <property type="entry name" value="Ac/propionate_kinase"/>
</dbReference>
<dbReference type="InterPro" id="IPR000890">
    <property type="entry name" value="Aliphatic_acid_kin_short-chain"/>
</dbReference>
<dbReference type="InterPro" id="IPR023865">
    <property type="entry name" value="Aliphatic_acid_kinase_CS"/>
</dbReference>
<dbReference type="InterPro" id="IPR043129">
    <property type="entry name" value="ATPase_NBD"/>
</dbReference>
<dbReference type="NCBIfam" id="TIGR00016">
    <property type="entry name" value="ackA"/>
    <property type="match status" value="1"/>
</dbReference>
<dbReference type="PANTHER" id="PTHR21060">
    <property type="entry name" value="ACETATE KINASE"/>
    <property type="match status" value="1"/>
</dbReference>
<dbReference type="PANTHER" id="PTHR21060:SF15">
    <property type="entry name" value="ACETATE KINASE-RELATED"/>
    <property type="match status" value="1"/>
</dbReference>
<dbReference type="Pfam" id="PF00871">
    <property type="entry name" value="Acetate_kinase"/>
    <property type="match status" value="1"/>
</dbReference>
<dbReference type="PIRSF" id="PIRSF000722">
    <property type="entry name" value="Acetate_prop_kin"/>
    <property type="match status" value="1"/>
</dbReference>
<dbReference type="PRINTS" id="PR00471">
    <property type="entry name" value="ACETATEKNASE"/>
</dbReference>
<dbReference type="SUPFAM" id="SSF53067">
    <property type="entry name" value="Actin-like ATPase domain"/>
    <property type="match status" value="2"/>
</dbReference>
<dbReference type="PROSITE" id="PS01075">
    <property type="entry name" value="ACETATE_KINASE_1"/>
    <property type="match status" value="1"/>
</dbReference>
<dbReference type="PROSITE" id="PS01076">
    <property type="entry name" value="ACETATE_KINASE_2"/>
    <property type="match status" value="1"/>
</dbReference>
<accession>A3PTW3</accession>
<keyword id="KW-0067">ATP-binding</keyword>
<keyword id="KW-0963">Cytoplasm</keyword>
<keyword id="KW-0418">Kinase</keyword>
<keyword id="KW-0460">Magnesium</keyword>
<keyword id="KW-0479">Metal-binding</keyword>
<keyword id="KW-0547">Nucleotide-binding</keyword>
<keyword id="KW-0808">Transferase</keyword>
<reference key="1">
    <citation type="submission" date="2007-02" db="EMBL/GenBank/DDBJ databases">
        <title>Complete sequence of Mycobacterium sp. JLS.</title>
        <authorList>
            <consortium name="US DOE Joint Genome Institute"/>
            <person name="Copeland A."/>
            <person name="Lucas S."/>
            <person name="Lapidus A."/>
            <person name="Barry K."/>
            <person name="Detter J.C."/>
            <person name="Glavina del Rio T."/>
            <person name="Hammon N."/>
            <person name="Israni S."/>
            <person name="Dalin E."/>
            <person name="Tice H."/>
            <person name="Pitluck S."/>
            <person name="Chain P."/>
            <person name="Malfatti S."/>
            <person name="Shin M."/>
            <person name="Vergez L."/>
            <person name="Schmutz J."/>
            <person name="Larimer F."/>
            <person name="Land M."/>
            <person name="Hauser L."/>
            <person name="Kyrpides N."/>
            <person name="Mikhailova N."/>
            <person name="Miller C.D."/>
            <person name="Anderson A.J."/>
            <person name="Sims R.C."/>
            <person name="Richardson P."/>
        </authorList>
    </citation>
    <scope>NUCLEOTIDE SEQUENCE [LARGE SCALE GENOMIC DNA]</scope>
    <source>
        <strain>JLS</strain>
    </source>
</reference>
<organism>
    <name type="scientific">Mycobacterium sp. (strain JLS)</name>
    <dbReference type="NCBI Taxonomy" id="164757"/>
    <lineage>
        <taxon>Bacteria</taxon>
        <taxon>Bacillati</taxon>
        <taxon>Actinomycetota</taxon>
        <taxon>Actinomycetes</taxon>
        <taxon>Mycobacteriales</taxon>
        <taxon>Mycobacteriaceae</taxon>
        <taxon>Mycobacterium</taxon>
    </lineage>
</organism>
<feature type="chain" id="PRO_1000002242" description="Acetate kinase">
    <location>
        <begin position="1"/>
        <end position="399"/>
    </location>
</feature>
<feature type="active site" description="Proton donor/acceptor" evidence="1">
    <location>
        <position position="147"/>
    </location>
</feature>
<feature type="binding site" evidence="1">
    <location>
        <position position="9"/>
    </location>
    <ligand>
        <name>Mg(2+)</name>
        <dbReference type="ChEBI" id="CHEBI:18420"/>
    </ligand>
</feature>
<feature type="binding site" evidence="1">
    <location>
        <position position="16"/>
    </location>
    <ligand>
        <name>ATP</name>
        <dbReference type="ChEBI" id="CHEBI:30616"/>
    </ligand>
</feature>
<feature type="binding site" evidence="1">
    <location>
        <position position="90"/>
    </location>
    <ligand>
        <name>substrate</name>
    </ligand>
</feature>
<feature type="binding site" evidence="1">
    <location>
        <begin position="207"/>
        <end position="211"/>
    </location>
    <ligand>
        <name>ATP</name>
        <dbReference type="ChEBI" id="CHEBI:30616"/>
    </ligand>
</feature>
<feature type="binding site" evidence="1">
    <location>
        <begin position="281"/>
        <end position="283"/>
    </location>
    <ligand>
        <name>ATP</name>
        <dbReference type="ChEBI" id="CHEBI:30616"/>
    </ligand>
</feature>
<feature type="binding site" evidence="1">
    <location>
        <begin position="333"/>
        <end position="337"/>
    </location>
    <ligand>
        <name>ATP</name>
        <dbReference type="ChEBI" id="CHEBI:30616"/>
    </ligand>
</feature>
<feature type="binding site" evidence="1">
    <location>
        <position position="387"/>
    </location>
    <ligand>
        <name>Mg(2+)</name>
        <dbReference type="ChEBI" id="CHEBI:18420"/>
    </ligand>
</feature>
<feature type="site" description="Transition state stabilizer" evidence="1">
    <location>
        <position position="179"/>
    </location>
</feature>
<feature type="site" description="Transition state stabilizer" evidence="1">
    <location>
        <position position="240"/>
    </location>
</feature>
<evidence type="ECO:0000255" key="1">
    <source>
        <dbReference type="HAMAP-Rule" id="MF_00020"/>
    </source>
</evidence>
<gene>
    <name evidence="1" type="primary">ackA</name>
    <name type="ordered locus">Mjls_0528</name>
</gene>